<gene>
    <name evidence="5" type="primary">Zmynd10</name>
    <name evidence="5" type="ORF">CG11253</name>
</gene>
<dbReference type="EMBL" id="AE014296">
    <property type="protein sequence ID" value="AAF49850.1"/>
    <property type="molecule type" value="Genomic_DNA"/>
</dbReference>
<dbReference type="EMBL" id="AY113309">
    <property type="protein sequence ID" value="AAM29314.1"/>
    <property type="molecule type" value="mRNA"/>
</dbReference>
<dbReference type="EMBL" id="BT044380">
    <property type="protein sequence ID" value="ACH92445.1"/>
    <property type="molecule type" value="mRNA"/>
</dbReference>
<dbReference type="RefSeq" id="NP_648625.1">
    <property type="nucleotide sequence ID" value="NM_140368.2"/>
</dbReference>
<dbReference type="SMR" id="Q9VU41"/>
<dbReference type="BioGRID" id="64827">
    <property type="interactions" value="4"/>
</dbReference>
<dbReference type="FunCoup" id="Q9VU41">
    <property type="interactions" value="36"/>
</dbReference>
<dbReference type="IntAct" id="Q9VU41">
    <property type="interactions" value="2"/>
</dbReference>
<dbReference type="STRING" id="7227.FBpp0075628"/>
<dbReference type="PaxDb" id="7227-FBpp0075628"/>
<dbReference type="DNASU" id="39481"/>
<dbReference type="EnsemblMetazoa" id="FBtr0075894">
    <property type="protein sequence ID" value="FBpp0075628"/>
    <property type="gene ID" value="FBgn0266709"/>
</dbReference>
<dbReference type="GeneID" id="39481"/>
<dbReference type="KEGG" id="dme:Dmel_CG11253"/>
<dbReference type="UCSC" id="CG11253-RA">
    <property type="organism name" value="d. melanogaster"/>
</dbReference>
<dbReference type="AGR" id="FB:FBgn0266709"/>
<dbReference type="CTD" id="51364"/>
<dbReference type="FlyBase" id="FBgn0266709">
    <property type="gene designation" value="Zmynd10"/>
</dbReference>
<dbReference type="VEuPathDB" id="VectorBase:FBgn0266709"/>
<dbReference type="eggNOG" id="ENOG502QS3F">
    <property type="taxonomic scope" value="Eukaryota"/>
</dbReference>
<dbReference type="GeneTree" id="ENSGT00940000153820"/>
<dbReference type="HOGENOM" id="CLU_034036_1_0_1"/>
<dbReference type="InParanoid" id="Q9VU41"/>
<dbReference type="OMA" id="LIHEAYC"/>
<dbReference type="OrthoDB" id="432970at2759"/>
<dbReference type="PhylomeDB" id="Q9VU41"/>
<dbReference type="BioGRID-ORCS" id="39481">
    <property type="hits" value="0 hits in 1 CRISPR screen"/>
</dbReference>
<dbReference type="GenomeRNAi" id="39481"/>
<dbReference type="PRO" id="PR:Q9VU41"/>
<dbReference type="Proteomes" id="UP000000803">
    <property type="component" value="Chromosome 3L"/>
</dbReference>
<dbReference type="Bgee" id="FBgn0266709">
    <property type="expression patterns" value="Expressed in early elongation stage spermatid (Drosophila) in testis and 24 other cell types or tissues"/>
</dbReference>
<dbReference type="GO" id="GO:0034451">
    <property type="term" value="C:centriolar satellite"/>
    <property type="evidence" value="ECO:0000318"/>
    <property type="project" value="GO_Central"/>
</dbReference>
<dbReference type="GO" id="GO:0005929">
    <property type="term" value="C:cilium"/>
    <property type="evidence" value="ECO:0007669"/>
    <property type="project" value="UniProtKB-SubCell"/>
</dbReference>
<dbReference type="GO" id="GO:0005737">
    <property type="term" value="C:cytoplasm"/>
    <property type="evidence" value="ECO:0000314"/>
    <property type="project" value="UniProtKB"/>
</dbReference>
<dbReference type="GO" id="GO:0120293">
    <property type="term" value="C:dynein axonemal particle"/>
    <property type="evidence" value="ECO:0000250"/>
    <property type="project" value="UniProtKB"/>
</dbReference>
<dbReference type="GO" id="GO:0043025">
    <property type="term" value="C:neuronal cell body"/>
    <property type="evidence" value="ECO:0000314"/>
    <property type="project" value="FlyBase"/>
</dbReference>
<dbReference type="GO" id="GO:0008270">
    <property type="term" value="F:zinc ion binding"/>
    <property type="evidence" value="ECO:0007669"/>
    <property type="project" value="UniProtKB-KW"/>
</dbReference>
<dbReference type="GO" id="GO:0035082">
    <property type="term" value="P:axoneme assembly"/>
    <property type="evidence" value="ECO:0000315"/>
    <property type="project" value="FlyBase"/>
</dbReference>
<dbReference type="GO" id="GO:0030317">
    <property type="term" value="P:flagellated sperm motility"/>
    <property type="evidence" value="ECO:0000315"/>
    <property type="project" value="UniProtKB"/>
</dbReference>
<dbReference type="GO" id="GO:0036159">
    <property type="term" value="P:inner dynein arm assembly"/>
    <property type="evidence" value="ECO:0000318"/>
    <property type="project" value="GO_Central"/>
</dbReference>
<dbReference type="GO" id="GO:0044458">
    <property type="term" value="P:motile cilium assembly"/>
    <property type="evidence" value="ECO:0000315"/>
    <property type="project" value="UniProtKB"/>
</dbReference>
<dbReference type="GO" id="GO:0036158">
    <property type="term" value="P:outer dynein arm assembly"/>
    <property type="evidence" value="ECO:0000315"/>
    <property type="project" value="UniProtKB"/>
</dbReference>
<dbReference type="GO" id="GO:0019230">
    <property type="term" value="P:proprioception"/>
    <property type="evidence" value="ECO:0000315"/>
    <property type="project" value="FlyBase"/>
</dbReference>
<dbReference type="GO" id="GO:0007605">
    <property type="term" value="P:sensory perception of sound"/>
    <property type="evidence" value="ECO:0000315"/>
    <property type="project" value="FlyBase"/>
</dbReference>
<dbReference type="Gene3D" id="6.10.140.2220">
    <property type="match status" value="1"/>
</dbReference>
<dbReference type="InterPro" id="IPR017333">
    <property type="entry name" value="UCP037948_Znf-MYND"/>
</dbReference>
<dbReference type="InterPro" id="IPR052298">
    <property type="entry name" value="ZMYND10"/>
</dbReference>
<dbReference type="InterPro" id="IPR002893">
    <property type="entry name" value="Znf_MYND"/>
</dbReference>
<dbReference type="PANTHER" id="PTHR13244">
    <property type="entry name" value="ZINC FINGER MYND DOMAIN CONTAINING PROTEIN 10"/>
    <property type="match status" value="1"/>
</dbReference>
<dbReference type="PANTHER" id="PTHR13244:SF7">
    <property type="entry name" value="ZINC FINGER MYND DOMAIN-CONTAINING PROTEIN 10"/>
    <property type="match status" value="1"/>
</dbReference>
<dbReference type="Pfam" id="PF01753">
    <property type="entry name" value="zf-MYND"/>
    <property type="match status" value="1"/>
</dbReference>
<dbReference type="PIRSF" id="PIRSF037948">
    <property type="entry name" value="UCP037948_Znf_MYND10"/>
    <property type="match status" value="1"/>
</dbReference>
<dbReference type="SUPFAM" id="SSF144232">
    <property type="entry name" value="HIT/MYND zinc finger-like"/>
    <property type="match status" value="1"/>
</dbReference>
<dbReference type="PROSITE" id="PS01360">
    <property type="entry name" value="ZF_MYND_1"/>
    <property type="match status" value="1"/>
</dbReference>
<dbReference type="PROSITE" id="PS50865">
    <property type="entry name" value="ZF_MYND_2"/>
    <property type="match status" value="1"/>
</dbReference>
<keyword id="KW-0966">Cell projection</keyword>
<keyword id="KW-0969">Cilium</keyword>
<keyword id="KW-0963">Cytoplasm</keyword>
<keyword id="KW-0479">Metal-binding</keyword>
<keyword id="KW-1185">Reference proteome</keyword>
<keyword id="KW-0862">Zinc</keyword>
<keyword id="KW-0863">Zinc-finger</keyword>
<reference key="1">
    <citation type="journal article" date="2000" name="Science">
        <title>The genome sequence of Drosophila melanogaster.</title>
        <authorList>
            <person name="Adams M.D."/>
            <person name="Celniker S.E."/>
            <person name="Holt R.A."/>
            <person name="Evans C.A."/>
            <person name="Gocayne J.D."/>
            <person name="Amanatides P.G."/>
            <person name="Scherer S.E."/>
            <person name="Li P.W."/>
            <person name="Hoskins R.A."/>
            <person name="Galle R.F."/>
            <person name="George R.A."/>
            <person name="Lewis S.E."/>
            <person name="Richards S."/>
            <person name="Ashburner M."/>
            <person name="Henderson S.N."/>
            <person name="Sutton G.G."/>
            <person name="Wortman J.R."/>
            <person name="Yandell M.D."/>
            <person name="Zhang Q."/>
            <person name="Chen L.X."/>
            <person name="Brandon R.C."/>
            <person name="Rogers Y.-H.C."/>
            <person name="Blazej R.G."/>
            <person name="Champe M."/>
            <person name="Pfeiffer B.D."/>
            <person name="Wan K.H."/>
            <person name="Doyle C."/>
            <person name="Baxter E.G."/>
            <person name="Helt G."/>
            <person name="Nelson C.R."/>
            <person name="Miklos G.L.G."/>
            <person name="Abril J.F."/>
            <person name="Agbayani A."/>
            <person name="An H.-J."/>
            <person name="Andrews-Pfannkoch C."/>
            <person name="Baldwin D."/>
            <person name="Ballew R.M."/>
            <person name="Basu A."/>
            <person name="Baxendale J."/>
            <person name="Bayraktaroglu L."/>
            <person name="Beasley E.M."/>
            <person name="Beeson K.Y."/>
            <person name="Benos P.V."/>
            <person name="Berman B.P."/>
            <person name="Bhandari D."/>
            <person name="Bolshakov S."/>
            <person name="Borkova D."/>
            <person name="Botchan M.R."/>
            <person name="Bouck J."/>
            <person name="Brokstein P."/>
            <person name="Brottier P."/>
            <person name="Burtis K.C."/>
            <person name="Busam D.A."/>
            <person name="Butler H."/>
            <person name="Cadieu E."/>
            <person name="Center A."/>
            <person name="Chandra I."/>
            <person name="Cherry J.M."/>
            <person name="Cawley S."/>
            <person name="Dahlke C."/>
            <person name="Davenport L.B."/>
            <person name="Davies P."/>
            <person name="de Pablos B."/>
            <person name="Delcher A."/>
            <person name="Deng Z."/>
            <person name="Mays A.D."/>
            <person name="Dew I."/>
            <person name="Dietz S.M."/>
            <person name="Dodson K."/>
            <person name="Doup L.E."/>
            <person name="Downes M."/>
            <person name="Dugan-Rocha S."/>
            <person name="Dunkov B.C."/>
            <person name="Dunn P."/>
            <person name="Durbin K.J."/>
            <person name="Evangelista C.C."/>
            <person name="Ferraz C."/>
            <person name="Ferriera S."/>
            <person name="Fleischmann W."/>
            <person name="Fosler C."/>
            <person name="Gabrielian A.E."/>
            <person name="Garg N.S."/>
            <person name="Gelbart W.M."/>
            <person name="Glasser K."/>
            <person name="Glodek A."/>
            <person name="Gong F."/>
            <person name="Gorrell J.H."/>
            <person name="Gu Z."/>
            <person name="Guan P."/>
            <person name="Harris M."/>
            <person name="Harris N.L."/>
            <person name="Harvey D.A."/>
            <person name="Heiman T.J."/>
            <person name="Hernandez J.R."/>
            <person name="Houck J."/>
            <person name="Hostin D."/>
            <person name="Houston K.A."/>
            <person name="Howland T.J."/>
            <person name="Wei M.-H."/>
            <person name="Ibegwam C."/>
            <person name="Jalali M."/>
            <person name="Kalush F."/>
            <person name="Karpen G.H."/>
            <person name="Ke Z."/>
            <person name="Kennison J.A."/>
            <person name="Ketchum K.A."/>
            <person name="Kimmel B.E."/>
            <person name="Kodira C.D."/>
            <person name="Kraft C.L."/>
            <person name="Kravitz S."/>
            <person name="Kulp D."/>
            <person name="Lai Z."/>
            <person name="Lasko P."/>
            <person name="Lei Y."/>
            <person name="Levitsky A.A."/>
            <person name="Li J.H."/>
            <person name="Li Z."/>
            <person name="Liang Y."/>
            <person name="Lin X."/>
            <person name="Liu X."/>
            <person name="Mattei B."/>
            <person name="McIntosh T.C."/>
            <person name="McLeod M.P."/>
            <person name="McPherson D."/>
            <person name="Merkulov G."/>
            <person name="Milshina N.V."/>
            <person name="Mobarry C."/>
            <person name="Morris J."/>
            <person name="Moshrefi A."/>
            <person name="Mount S.M."/>
            <person name="Moy M."/>
            <person name="Murphy B."/>
            <person name="Murphy L."/>
            <person name="Muzny D.M."/>
            <person name="Nelson D.L."/>
            <person name="Nelson D.R."/>
            <person name="Nelson K.A."/>
            <person name="Nixon K."/>
            <person name="Nusskern D.R."/>
            <person name="Pacleb J.M."/>
            <person name="Palazzolo M."/>
            <person name="Pittman G.S."/>
            <person name="Pan S."/>
            <person name="Pollard J."/>
            <person name="Puri V."/>
            <person name="Reese M.G."/>
            <person name="Reinert K."/>
            <person name="Remington K."/>
            <person name="Saunders R.D.C."/>
            <person name="Scheeler F."/>
            <person name="Shen H."/>
            <person name="Shue B.C."/>
            <person name="Siden-Kiamos I."/>
            <person name="Simpson M."/>
            <person name="Skupski M.P."/>
            <person name="Smith T.J."/>
            <person name="Spier E."/>
            <person name="Spradling A.C."/>
            <person name="Stapleton M."/>
            <person name="Strong R."/>
            <person name="Sun E."/>
            <person name="Svirskas R."/>
            <person name="Tector C."/>
            <person name="Turner R."/>
            <person name="Venter E."/>
            <person name="Wang A.H."/>
            <person name="Wang X."/>
            <person name="Wang Z.-Y."/>
            <person name="Wassarman D.A."/>
            <person name="Weinstock G.M."/>
            <person name="Weissenbach J."/>
            <person name="Williams S.M."/>
            <person name="Woodage T."/>
            <person name="Worley K.C."/>
            <person name="Wu D."/>
            <person name="Yang S."/>
            <person name="Yao Q.A."/>
            <person name="Ye J."/>
            <person name="Yeh R.-F."/>
            <person name="Zaveri J.S."/>
            <person name="Zhan M."/>
            <person name="Zhang G."/>
            <person name="Zhao Q."/>
            <person name="Zheng L."/>
            <person name="Zheng X.H."/>
            <person name="Zhong F.N."/>
            <person name="Zhong W."/>
            <person name="Zhou X."/>
            <person name="Zhu S.C."/>
            <person name="Zhu X."/>
            <person name="Smith H.O."/>
            <person name="Gibbs R.A."/>
            <person name="Myers E.W."/>
            <person name="Rubin G.M."/>
            <person name="Venter J.C."/>
        </authorList>
    </citation>
    <scope>NUCLEOTIDE SEQUENCE [LARGE SCALE GENOMIC DNA]</scope>
    <source>
        <strain>Berkeley</strain>
    </source>
</reference>
<reference key="2">
    <citation type="journal article" date="2002" name="Genome Biol.">
        <title>Annotation of the Drosophila melanogaster euchromatic genome: a systematic review.</title>
        <authorList>
            <person name="Misra S."/>
            <person name="Crosby M.A."/>
            <person name="Mungall C.J."/>
            <person name="Matthews B.B."/>
            <person name="Campbell K.S."/>
            <person name="Hradecky P."/>
            <person name="Huang Y."/>
            <person name="Kaminker J.S."/>
            <person name="Millburn G.H."/>
            <person name="Prochnik S.E."/>
            <person name="Smith C.D."/>
            <person name="Tupy J.L."/>
            <person name="Whitfield E.J."/>
            <person name="Bayraktaroglu L."/>
            <person name="Berman B.P."/>
            <person name="Bettencourt B.R."/>
            <person name="Celniker S.E."/>
            <person name="de Grey A.D.N.J."/>
            <person name="Drysdale R.A."/>
            <person name="Harris N.L."/>
            <person name="Richter J."/>
            <person name="Russo S."/>
            <person name="Schroeder A.J."/>
            <person name="Shu S.Q."/>
            <person name="Stapleton M."/>
            <person name="Yamada C."/>
            <person name="Ashburner M."/>
            <person name="Gelbart W.M."/>
            <person name="Rubin G.M."/>
            <person name="Lewis S.E."/>
        </authorList>
    </citation>
    <scope>GENOME REANNOTATION</scope>
    <source>
        <strain>Berkeley</strain>
    </source>
</reference>
<reference key="3">
    <citation type="journal article" date="2002" name="Genome Biol.">
        <title>A Drosophila full-length cDNA resource.</title>
        <authorList>
            <person name="Stapleton M."/>
            <person name="Carlson J.W."/>
            <person name="Brokstein P."/>
            <person name="Yu C."/>
            <person name="Champe M."/>
            <person name="George R.A."/>
            <person name="Guarin H."/>
            <person name="Kronmiller B."/>
            <person name="Pacleb J.M."/>
            <person name="Park S."/>
            <person name="Wan K.H."/>
            <person name="Rubin G.M."/>
            <person name="Celniker S.E."/>
        </authorList>
    </citation>
    <scope>NUCLEOTIDE SEQUENCE [LARGE SCALE MRNA]</scope>
    <source>
        <strain>Berkeley</strain>
        <tissue>Testis</tissue>
    </source>
</reference>
<reference key="4">
    <citation type="submission" date="2008-09" db="EMBL/GenBank/DDBJ databases">
        <authorList>
            <person name="Carlson J."/>
            <person name="Booth B."/>
            <person name="Frise E."/>
            <person name="Park S."/>
            <person name="Wan K."/>
            <person name="Yu C."/>
            <person name="Celniker S."/>
        </authorList>
    </citation>
    <scope>NUCLEOTIDE SEQUENCE [LARGE SCALE MRNA]</scope>
    <source>
        <strain>Berkeley</strain>
    </source>
</reference>
<reference key="5">
    <citation type="journal article" date="2013" name="Am. J. Hum. Genet.">
        <title>Mutations in ZMYND10, a gene essential for proper axonemal assembly of inner and outer dynein arms in humans and flies, cause primary ciliary dyskinesia.</title>
        <authorList>
            <person name="Moore D.J."/>
            <person name="Onoufriadis A."/>
            <person name="Shoemark A."/>
            <person name="Simpson M.A."/>
            <person name="Zur Lage P.I."/>
            <person name="de Castro S.C."/>
            <person name="Bartoloni L."/>
            <person name="Gallone G."/>
            <person name="Petridi S."/>
            <person name="Woollard W.J."/>
            <person name="Antony D."/>
            <person name="Schmidts M."/>
            <person name="Didonna T."/>
            <person name="Makrythanasis P."/>
            <person name="Bevillard J."/>
            <person name="Mongan N.P."/>
            <person name="Djakow J."/>
            <person name="Pals G."/>
            <person name="Lucas J.S."/>
            <person name="Marthin J.K."/>
            <person name="Nielsen K.G."/>
            <person name="Santoni F."/>
            <person name="Guipponi M."/>
            <person name="Hogg C."/>
            <person name="Antonarakis S.E."/>
            <person name="Emes R.D."/>
            <person name="Chung E.M."/>
            <person name="Greene N.D."/>
            <person name="Blouin J.L."/>
            <person name="Jarman A.P."/>
            <person name="Mitchison H.M."/>
        </authorList>
    </citation>
    <scope>FUNCTION</scope>
    <scope>SUBCELLULAR LOCATION</scope>
    <scope>TISSUE SPECIFICITY</scope>
    <scope>DISRUPTION PHENOTYPE</scope>
    <scope>INDUCTION</scope>
    <scope>MUTAGENESIS OF VAL-14</scope>
</reference>
<comment type="function">
    <text evidence="3">Plays a role in axonemal structure organization and motility. May be involved in axonemal pre-assembly of inner and outer dynein arms (IDA and ODA, respectively) for proper axoneme building for cilia motility.</text>
</comment>
<comment type="subcellular location">
    <subcellularLocation>
        <location evidence="3">Cytoplasm</location>
    </subcellularLocation>
    <subcellularLocation>
        <location evidence="3">Cell projection</location>
        <location evidence="3">Cilium</location>
    </subcellularLocation>
    <subcellularLocation>
        <location evidence="1">Dynein axonemal particle</location>
    </subcellularLocation>
    <text>Localizes mainly to the cytoplasm. Present in the cell bodies of Ch neurons. Present at low level in the cilium.</text>
</comment>
<comment type="tissue specificity">
    <text evidence="3">Specifically expressed in cells with flagella and motile cilia: chordotonal sensory neurons and sperm.</text>
</comment>
<comment type="developmental stage">
    <text>During embryogenesis expression is restricted to developing Ch neurons and absent from other ciliated sensory neurons. In the pupal antenna, expressed exclusively in the Ch neurons of Johnston's organ.</text>
</comment>
<comment type="induction">
    <text evidence="3">Expression is dependent on the transcription factors that regulate motile cilia such as Rfx and Fd3F.</text>
</comment>
<comment type="disruption phenotype">
    <text evidence="3">Sensory defects and loss of the axonemal dynein arms. Flies display defective proprioception as a result of malfunctioning Ch neurons caused by inner and outer dynein arms (IDA and ODA, respectively) defects. Males sterility due to immotile sperm.</text>
</comment>
<comment type="similarity">
    <text evidence="4">Belongs to the ZMYND10 family.</text>
</comment>
<sequence>MVNFVHPEEMYLFVESIRPFEVREVGSPKWLEVHEMILGLSQQAALELSQNREEEVKEFLISRDKLRVLIHEAYCVTLWKTRVLPHLLEIDPNPQATFLIYTVLYHEAALVALLDVCLYHPSGCETLQESVLDLIDYCAQAISQVIGLVSMGYHENETKLDVDEAVLTELERQKRDFIYKIGLRCISVLNYIADNVTLFHLSAARRLLVTHDIPWLMADVLSFRPWQRKTSKGIQKFIDEKWTNVDDVTKIVKPEAQAWFCVRQLLLNPQIMENYAFNEARCKQLHKLLGLMHEPLLDQLPPLIELKVFLSRLTLSGNTAKTQPLLLEDIPQIQEELLKDVEENGGFYQIAQDQDSVFLSKNKENICALATRLSKAYGTDLLCELEQNMDDLKMGEAKDAGAGGDGDTDHTCATCQAKAKKKCACCKKVHYCSRDCQLKDWPQHKLVCLKT</sequence>
<proteinExistence type="evidence at protein level"/>
<organism>
    <name type="scientific">Drosophila melanogaster</name>
    <name type="common">Fruit fly</name>
    <dbReference type="NCBI Taxonomy" id="7227"/>
    <lineage>
        <taxon>Eukaryota</taxon>
        <taxon>Metazoa</taxon>
        <taxon>Ecdysozoa</taxon>
        <taxon>Arthropoda</taxon>
        <taxon>Hexapoda</taxon>
        <taxon>Insecta</taxon>
        <taxon>Pterygota</taxon>
        <taxon>Neoptera</taxon>
        <taxon>Endopterygota</taxon>
        <taxon>Diptera</taxon>
        <taxon>Brachycera</taxon>
        <taxon>Muscomorpha</taxon>
        <taxon>Ephydroidea</taxon>
        <taxon>Drosophilidae</taxon>
        <taxon>Drosophila</taxon>
        <taxon>Sophophora</taxon>
    </lineage>
</organism>
<evidence type="ECO:0000250" key="1">
    <source>
        <dbReference type="UniProtKB" id="Q5FWU8"/>
    </source>
</evidence>
<evidence type="ECO:0000255" key="2">
    <source>
        <dbReference type="PROSITE-ProRule" id="PRU00134"/>
    </source>
</evidence>
<evidence type="ECO:0000269" key="3">
    <source>
    </source>
</evidence>
<evidence type="ECO:0000305" key="4"/>
<evidence type="ECO:0000312" key="5">
    <source>
        <dbReference type="FlyBase" id="FBgn0266709"/>
    </source>
</evidence>
<feature type="chain" id="PRO_0000424818" description="Zinc finger MYND domain-containing protein 10 homolog">
    <location>
        <begin position="1"/>
        <end position="451"/>
    </location>
</feature>
<feature type="zinc finger region" description="MYND-type" evidence="2">
    <location>
        <begin position="412"/>
        <end position="448"/>
    </location>
</feature>
<feature type="binding site" evidence="2">
    <location>
        <position position="412"/>
    </location>
    <ligand>
        <name>Zn(2+)</name>
        <dbReference type="ChEBI" id="CHEBI:29105"/>
        <label>1</label>
    </ligand>
</feature>
<feature type="binding site" evidence="2">
    <location>
        <position position="415"/>
    </location>
    <ligand>
        <name>Zn(2+)</name>
        <dbReference type="ChEBI" id="CHEBI:29105"/>
        <label>1</label>
    </ligand>
</feature>
<feature type="binding site" evidence="2">
    <location>
        <position position="423"/>
    </location>
    <ligand>
        <name>Zn(2+)</name>
        <dbReference type="ChEBI" id="CHEBI:29105"/>
        <label>2</label>
    </ligand>
</feature>
<feature type="binding site" evidence="2">
    <location>
        <position position="426"/>
    </location>
    <ligand>
        <name>Zn(2+)</name>
        <dbReference type="ChEBI" id="CHEBI:29105"/>
        <label>2</label>
    </ligand>
</feature>
<feature type="binding site" evidence="2">
    <location>
        <position position="432"/>
    </location>
    <ligand>
        <name>Zn(2+)</name>
        <dbReference type="ChEBI" id="CHEBI:29105"/>
        <label>1</label>
    </ligand>
</feature>
<feature type="binding site" evidence="2">
    <location>
        <position position="436"/>
    </location>
    <ligand>
        <name>Zn(2+)</name>
        <dbReference type="ChEBI" id="CHEBI:29105"/>
        <label>1</label>
    </ligand>
</feature>
<feature type="binding site" evidence="2">
    <location>
        <position position="444"/>
    </location>
    <ligand>
        <name>Zn(2+)</name>
        <dbReference type="ChEBI" id="CHEBI:29105"/>
        <label>2</label>
    </ligand>
</feature>
<feature type="binding site" evidence="2">
    <location>
        <position position="448"/>
    </location>
    <ligand>
        <name>Zn(2+)</name>
        <dbReference type="ChEBI" id="CHEBI:29105"/>
        <label>2</label>
    </ligand>
</feature>
<feature type="mutagenesis site" description="Partially rescues sterility when transfected in a homozygous mutant fly." evidence="3">
    <original>V</original>
    <variation>G</variation>
    <location>
        <position position="14"/>
    </location>
</feature>
<feature type="sequence conflict" description="In Ref. 3; AAM29314." evidence="4" ref="3">
    <original>V</original>
    <variation>M</variation>
    <location>
        <position position="116"/>
    </location>
</feature>
<protein>
    <recommendedName>
        <fullName>Zinc finger MYND domain-containing protein 10 homolog</fullName>
    </recommendedName>
</protein>
<name>ZMY10_DROME</name>
<accession>Q9VU41</accession>
<accession>Q8MZ82</accession>